<feature type="chain" id="PRO_0000175352" description="DNA-directed RNA polymerase subunit alpha">
    <location>
        <begin position="1"/>
        <end position="329"/>
    </location>
</feature>
<feature type="region of interest" description="Alpha N-terminal domain (alpha-NTD)" evidence="1">
    <location>
        <begin position="1"/>
        <end position="235"/>
    </location>
</feature>
<feature type="region of interest" description="Alpha C-terminal domain (alpha-CTD)" evidence="1">
    <location>
        <begin position="249"/>
        <end position="329"/>
    </location>
</feature>
<name>RPOA_PHOLL</name>
<organism>
    <name type="scientific">Photorhabdus laumondii subsp. laumondii (strain DSM 15139 / CIP 105565 / TT01)</name>
    <name type="common">Photorhabdus luminescens subsp. laumondii</name>
    <dbReference type="NCBI Taxonomy" id="243265"/>
    <lineage>
        <taxon>Bacteria</taxon>
        <taxon>Pseudomonadati</taxon>
        <taxon>Pseudomonadota</taxon>
        <taxon>Gammaproteobacteria</taxon>
        <taxon>Enterobacterales</taxon>
        <taxon>Morganellaceae</taxon>
        <taxon>Photorhabdus</taxon>
    </lineage>
</organism>
<protein>
    <recommendedName>
        <fullName evidence="1">DNA-directed RNA polymerase subunit alpha</fullName>
        <shortName evidence="1">RNAP subunit alpha</shortName>
        <ecNumber evidence="1">2.7.7.6</ecNumber>
    </recommendedName>
    <alternativeName>
        <fullName evidence="1">RNA polymerase subunit alpha</fullName>
    </alternativeName>
    <alternativeName>
        <fullName evidence="1">Transcriptase subunit alpha</fullName>
    </alternativeName>
</protein>
<accession>Q7MYH5</accession>
<sequence length="329" mass="36481">MQGSVTEFLKPRLVDIEQVSSTHAKVTLEPLERGFGHTLGNALRRILLSSMPGCAVTEVEIDGVLHEYSTKEGVQEDILEILLNLKGLAVRVQGKDEVILTLNKSGIGPVTAADIIHDGDVEIVKPQHVICHLTDETASISMRIKVQRGRGYVPASARIHSEEDERPIGRLLVDACYSPVERIAYNVEAARVEQRTDLDKLVIEMETNGTIDPEEAIRRAATILAEQLEAFVDLRDVRQPEVKEEKPEFDPILLRPVDDLELTVRSANCLKAEAIHYIGDLVQRTEVELLKTPNLGKKSLTEIKDVLASRGLSLGMRLENWPPASIADE</sequence>
<proteinExistence type="inferred from homology"/>
<keyword id="KW-0240">DNA-directed RNA polymerase</keyword>
<keyword id="KW-0548">Nucleotidyltransferase</keyword>
<keyword id="KW-1185">Reference proteome</keyword>
<keyword id="KW-0804">Transcription</keyword>
<keyword id="KW-0808">Transferase</keyword>
<comment type="function">
    <text evidence="1">DNA-dependent RNA polymerase catalyzes the transcription of DNA into RNA using the four ribonucleoside triphosphates as substrates.</text>
</comment>
<comment type="catalytic activity">
    <reaction evidence="1">
        <text>RNA(n) + a ribonucleoside 5'-triphosphate = RNA(n+1) + diphosphate</text>
        <dbReference type="Rhea" id="RHEA:21248"/>
        <dbReference type="Rhea" id="RHEA-COMP:14527"/>
        <dbReference type="Rhea" id="RHEA-COMP:17342"/>
        <dbReference type="ChEBI" id="CHEBI:33019"/>
        <dbReference type="ChEBI" id="CHEBI:61557"/>
        <dbReference type="ChEBI" id="CHEBI:140395"/>
        <dbReference type="EC" id="2.7.7.6"/>
    </reaction>
</comment>
<comment type="subunit">
    <text evidence="1">Homodimer. The RNAP catalytic core consists of 2 alpha, 1 beta, 1 beta' and 1 omega subunit. When a sigma factor is associated with the core the holoenzyme is formed, which can initiate transcription.</text>
</comment>
<comment type="domain">
    <text evidence="1">The N-terminal domain is essential for RNAP assembly and basal transcription, whereas the C-terminal domain is involved in interaction with transcriptional regulators and with upstream promoter elements.</text>
</comment>
<comment type="similarity">
    <text evidence="1">Belongs to the RNA polymerase alpha chain family.</text>
</comment>
<dbReference type="EC" id="2.7.7.6" evidence="1"/>
<dbReference type="EMBL" id="BX571874">
    <property type="protein sequence ID" value="CAE17074.1"/>
    <property type="molecule type" value="Genomic_DNA"/>
</dbReference>
<dbReference type="RefSeq" id="WP_011148772.1">
    <property type="nucleotide sequence ID" value="NC_005126.1"/>
</dbReference>
<dbReference type="SMR" id="Q7MYH5"/>
<dbReference type="STRING" id="243265.plu4702"/>
<dbReference type="GeneID" id="48850926"/>
<dbReference type="KEGG" id="plu:plu4702"/>
<dbReference type="eggNOG" id="COG0202">
    <property type="taxonomic scope" value="Bacteria"/>
</dbReference>
<dbReference type="HOGENOM" id="CLU_053084_0_1_6"/>
<dbReference type="OrthoDB" id="9805706at2"/>
<dbReference type="Proteomes" id="UP000002514">
    <property type="component" value="Chromosome"/>
</dbReference>
<dbReference type="GO" id="GO:0005737">
    <property type="term" value="C:cytoplasm"/>
    <property type="evidence" value="ECO:0007669"/>
    <property type="project" value="UniProtKB-ARBA"/>
</dbReference>
<dbReference type="GO" id="GO:0000428">
    <property type="term" value="C:DNA-directed RNA polymerase complex"/>
    <property type="evidence" value="ECO:0007669"/>
    <property type="project" value="UniProtKB-KW"/>
</dbReference>
<dbReference type="GO" id="GO:0003677">
    <property type="term" value="F:DNA binding"/>
    <property type="evidence" value="ECO:0007669"/>
    <property type="project" value="UniProtKB-UniRule"/>
</dbReference>
<dbReference type="GO" id="GO:0003899">
    <property type="term" value="F:DNA-directed RNA polymerase activity"/>
    <property type="evidence" value="ECO:0007669"/>
    <property type="project" value="UniProtKB-UniRule"/>
</dbReference>
<dbReference type="GO" id="GO:0046983">
    <property type="term" value="F:protein dimerization activity"/>
    <property type="evidence" value="ECO:0007669"/>
    <property type="project" value="InterPro"/>
</dbReference>
<dbReference type="GO" id="GO:0006351">
    <property type="term" value="P:DNA-templated transcription"/>
    <property type="evidence" value="ECO:0007669"/>
    <property type="project" value="UniProtKB-UniRule"/>
</dbReference>
<dbReference type="CDD" id="cd06928">
    <property type="entry name" value="RNAP_alpha_NTD"/>
    <property type="match status" value="1"/>
</dbReference>
<dbReference type="FunFam" id="1.10.150.20:FF:000001">
    <property type="entry name" value="DNA-directed RNA polymerase subunit alpha"/>
    <property type="match status" value="1"/>
</dbReference>
<dbReference type="FunFam" id="2.170.120.12:FF:000001">
    <property type="entry name" value="DNA-directed RNA polymerase subunit alpha"/>
    <property type="match status" value="1"/>
</dbReference>
<dbReference type="Gene3D" id="1.10.150.20">
    <property type="entry name" value="5' to 3' exonuclease, C-terminal subdomain"/>
    <property type="match status" value="1"/>
</dbReference>
<dbReference type="Gene3D" id="2.170.120.12">
    <property type="entry name" value="DNA-directed RNA polymerase, insert domain"/>
    <property type="match status" value="1"/>
</dbReference>
<dbReference type="Gene3D" id="3.30.1360.10">
    <property type="entry name" value="RNA polymerase, RBP11-like subunit"/>
    <property type="match status" value="1"/>
</dbReference>
<dbReference type="HAMAP" id="MF_00059">
    <property type="entry name" value="RNApol_bact_RpoA"/>
    <property type="match status" value="1"/>
</dbReference>
<dbReference type="InterPro" id="IPR011262">
    <property type="entry name" value="DNA-dir_RNA_pol_insert"/>
</dbReference>
<dbReference type="InterPro" id="IPR011263">
    <property type="entry name" value="DNA-dir_RNA_pol_RpoA/D/Rpb3"/>
</dbReference>
<dbReference type="InterPro" id="IPR011773">
    <property type="entry name" value="DNA-dir_RpoA"/>
</dbReference>
<dbReference type="InterPro" id="IPR036603">
    <property type="entry name" value="RBP11-like"/>
</dbReference>
<dbReference type="InterPro" id="IPR011260">
    <property type="entry name" value="RNAP_asu_C"/>
</dbReference>
<dbReference type="InterPro" id="IPR036643">
    <property type="entry name" value="RNApol_insert_sf"/>
</dbReference>
<dbReference type="NCBIfam" id="NF003513">
    <property type="entry name" value="PRK05182.1-2"/>
    <property type="match status" value="1"/>
</dbReference>
<dbReference type="NCBIfam" id="NF003519">
    <property type="entry name" value="PRK05182.2-5"/>
    <property type="match status" value="1"/>
</dbReference>
<dbReference type="NCBIfam" id="TIGR02027">
    <property type="entry name" value="rpoA"/>
    <property type="match status" value="1"/>
</dbReference>
<dbReference type="Pfam" id="PF01000">
    <property type="entry name" value="RNA_pol_A_bac"/>
    <property type="match status" value="1"/>
</dbReference>
<dbReference type="Pfam" id="PF03118">
    <property type="entry name" value="RNA_pol_A_CTD"/>
    <property type="match status" value="1"/>
</dbReference>
<dbReference type="Pfam" id="PF01193">
    <property type="entry name" value="RNA_pol_L"/>
    <property type="match status" value="1"/>
</dbReference>
<dbReference type="SMART" id="SM00662">
    <property type="entry name" value="RPOLD"/>
    <property type="match status" value="1"/>
</dbReference>
<dbReference type="SUPFAM" id="SSF47789">
    <property type="entry name" value="C-terminal domain of RNA polymerase alpha subunit"/>
    <property type="match status" value="1"/>
</dbReference>
<dbReference type="SUPFAM" id="SSF56553">
    <property type="entry name" value="Insert subdomain of RNA polymerase alpha subunit"/>
    <property type="match status" value="1"/>
</dbReference>
<dbReference type="SUPFAM" id="SSF55257">
    <property type="entry name" value="RBP11-like subunits of RNA polymerase"/>
    <property type="match status" value="1"/>
</dbReference>
<reference key="1">
    <citation type="journal article" date="2003" name="Nat. Biotechnol.">
        <title>The genome sequence of the entomopathogenic bacterium Photorhabdus luminescens.</title>
        <authorList>
            <person name="Duchaud E."/>
            <person name="Rusniok C."/>
            <person name="Frangeul L."/>
            <person name="Buchrieser C."/>
            <person name="Givaudan A."/>
            <person name="Taourit S."/>
            <person name="Bocs S."/>
            <person name="Boursaux-Eude C."/>
            <person name="Chandler M."/>
            <person name="Charles J.-F."/>
            <person name="Dassa E."/>
            <person name="Derose R."/>
            <person name="Derzelle S."/>
            <person name="Freyssinet G."/>
            <person name="Gaudriault S."/>
            <person name="Medigue C."/>
            <person name="Lanois A."/>
            <person name="Powell K."/>
            <person name="Siguier P."/>
            <person name="Vincent R."/>
            <person name="Wingate V."/>
            <person name="Zouine M."/>
            <person name="Glaser P."/>
            <person name="Boemare N."/>
            <person name="Danchin A."/>
            <person name="Kunst F."/>
        </authorList>
    </citation>
    <scope>NUCLEOTIDE SEQUENCE [LARGE SCALE GENOMIC DNA]</scope>
    <source>
        <strain>DSM 15139 / CIP 105565 / TT01</strain>
    </source>
</reference>
<gene>
    <name evidence="1" type="primary">rpoA</name>
    <name type="ordered locus">plu4702</name>
</gene>
<evidence type="ECO:0000255" key="1">
    <source>
        <dbReference type="HAMAP-Rule" id="MF_00059"/>
    </source>
</evidence>